<name>PDS5A_MOUSE</name>
<organism>
    <name type="scientific">Mus musculus</name>
    <name type="common">Mouse</name>
    <dbReference type="NCBI Taxonomy" id="10090"/>
    <lineage>
        <taxon>Eukaryota</taxon>
        <taxon>Metazoa</taxon>
        <taxon>Chordata</taxon>
        <taxon>Craniata</taxon>
        <taxon>Vertebrata</taxon>
        <taxon>Euteleostomi</taxon>
        <taxon>Mammalia</taxon>
        <taxon>Eutheria</taxon>
        <taxon>Euarchontoglires</taxon>
        <taxon>Glires</taxon>
        <taxon>Rodentia</taxon>
        <taxon>Myomorpha</taxon>
        <taxon>Muroidea</taxon>
        <taxon>Muridae</taxon>
        <taxon>Murinae</taxon>
        <taxon>Mus</taxon>
        <taxon>Mus</taxon>
    </lineage>
</organism>
<keyword id="KW-0007">Acetylation</keyword>
<keyword id="KW-0131">Cell cycle</keyword>
<keyword id="KW-0132">Cell division</keyword>
<keyword id="KW-0498">Mitosis</keyword>
<keyword id="KW-0539">Nucleus</keyword>
<keyword id="KW-0597">Phosphoprotein</keyword>
<keyword id="KW-1185">Reference proteome</keyword>
<keyword id="KW-0677">Repeat</keyword>
<accession>Q6A026</accession>
<accession>E9Q656</accession>
<protein>
    <recommendedName>
        <fullName>Sister chromatid cohesion protein PDS5 homolog A</fullName>
    </recommendedName>
</protein>
<proteinExistence type="evidence at protein level"/>
<comment type="function">
    <text evidence="1">Probable regulator of sister chromatid cohesion in mitosis which may stabilize cohesin complex association with chromatin. May couple sister chromatid cohesion during mitosis to DNA replication. Cohesion ensures that chromosome partitioning is accurate in both meiotic and mitotic cells and plays an important role in DNA repair (By similarity).</text>
</comment>
<comment type="subunit">
    <text evidence="1">Interacts with the cohesin complex. Interacts with WAPL (via FGF motifs) or CDCA5 (via the FGF motif); the interaction is direct, cohesin-dependent and competitive. Interacts with SMC3. Interacts with TP63 (By similarity).</text>
</comment>
<comment type="subcellular location">
    <subcellularLocation>
        <location evidence="2">Nucleus</location>
    </subcellularLocation>
    <text evidence="2">Associated with chromatin through most of the cell cycle. Dissociates from chromatin in late prophase, reassociates during late telophase (By similarity).</text>
</comment>
<comment type="similarity">
    <text evidence="5">Belongs to the PDS5 family.</text>
</comment>
<comment type="sequence caution" evidence="5">
    <conflict type="erroneous initiation">
        <sequence resource="EMBL-CDS" id="BAD32270"/>
    </conflict>
</comment>
<sequence length="1332" mass="150327">MDFTQPKPATALCGVVSADGKIAYPPGVKEITDKITTDEMIKRLKMVVKTFMDMDQDSEDEKQQYLPLALHLASEFFLRNPNKDVRLLVACCLADIFRIYAPEAPYTSHDKLKDIFLFITRQLKGLEDTKSPQFNRYFYLLENLAWVKSYNICFELEDCNEIFIQLFRTLFSVINNSHNTKVQMHMLDLMSSIIMEGDGVTQELLDSILINLIPAHKNLNKQSFDLAKVLLKRTVQTIEACIANFFNQVLVLGRSSVSDLSEHVFDLIQELFAIDPQLLLSVMPQLEFKLKSNDGEERLAVVRLLAKLFGSKDSDLATQNRPLWQCFLGRFNDIHVPVRLESVKFASHCLMNHPDLAKDLTEYLKVRSHDPEEAIRHDVIVTIITAAKRDLALVNDQLLGFVRERTLDKRWRVRKEAMMGLAQLYKKYCLHGEAGKEAAEKVSWIKDKLLHIYYQNSIDDKLLVEKIFAQYLVPHNLETEERMKCLYYLYASLDPNAVKALNEMWKCQNMLRSHVRELLDLHKQPTSEANCSAMFGKLMTIAKNLPDPGKAQDFVKKFNQVLGDDEKLRSQLELLISPTCSCKQADVCVREIARKLANPKQPTNPFLEMVKFLLERIAPVHIDSEAISALVKLMNKSIEGTADDEEEGVSPDSAIRSGLELLKVLSFTHPTSFHSAETYESLLQCLRMEDDKVAEAAIQIFRNTGHKIETDLPQIRSTLIPILHQKAKRGTPHQAKQAVHCIHAIFSNKEVQLAQIFEPLSRSLNADVPEQLITPLVSLGHISMLAPDQFASPMKSVVANFIVKDLLMNDRSTGEKNGKLWSPDEEVSPEVLAKVYLLRLLVRWLLGMKNNQSKSANSTLRLLSAMLVSEGDLTEQKRISKSDMSRLRLAAGSAIMKLAQEPCYHEIITPEQFQLCALVINDECYQVRQIFAQKLHKALVKLLLPLEYMAIFALCAKDPVKERRAHARQCLLKNISIRREYIKQNPMATEKLLSLLPEYVVPYMIHLLAHDPDFTRSQDVDQLRDIKECLWFMLEVLMTKNENNSHAFMKKMAENIKLTRDAQSPDESKTNEKLYTVCDVALCVINSKSALCNADSPKDPVLPMKFFTQPEKDFCNDKSYISEETRVLLLTGKPKPTGVLGTVNKPLSATGRKPYVRSAGTETGSNINANSELSPSAGSRSREQSSEASETGVSENEENPVRIISVTPVKNIDTVKNKEINSDQSTQGNISSDRGKKRIVTAAGAENIQKPDEKVDESGPPAPSKPRRGRRPKSESQGNATKNDDLNKPVSKGRKRAAGSQESLEAGNAKAPKLQDGAKKAVPAERQIDLQR</sequence>
<gene>
    <name type="primary">Pds5a</name>
    <name evidence="6" type="synonym">Kiaa0648</name>
</gene>
<evidence type="ECO:0000250" key="1"/>
<evidence type="ECO:0000250" key="2">
    <source>
        <dbReference type="UniProtKB" id="Q29RF7"/>
    </source>
</evidence>
<evidence type="ECO:0000255" key="3"/>
<evidence type="ECO:0000256" key="4">
    <source>
        <dbReference type="SAM" id="MobiDB-lite"/>
    </source>
</evidence>
<evidence type="ECO:0000305" key="5"/>
<evidence type="ECO:0000312" key="6">
    <source>
        <dbReference type="EMBL" id="BAD32270.1"/>
    </source>
</evidence>
<evidence type="ECO:0007744" key="7">
    <source>
    </source>
</evidence>
<evidence type="ECO:0007744" key="8">
    <source>
    </source>
</evidence>
<dbReference type="EMBL" id="AC112263">
    <property type="status" value="NOT_ANNOTATED_CDS"/>
    <property type="molecule type" value="Genomic_DNA"/>
</dbReference>
<dbReference type="EMBL" id="AK172992">
    <property type="protein sequence ID" value="BAD32270.1"/>
    <property type="status" value="ALT_INIT"/>
    <property type="molecule type" value="Transcribed_RNA"/>
</dbReference>
<dbReference type="SMR" id="Q6A026"/>
<dbReference type="FunCoup" id="Q6A026">
    <property type="interactions" value="4048"/>
</dbReference>
<dbReference type="IntAct" id="Q6A026">
    <property type="interactions" value="14"/>
</dbReference>
<dbReference type="MINT" id="Q6A026"/>
<dbReference type="STRING" id="10090.ENSMUSP00000144171"/>
<dbReference type="GlyGen" id="Q6A026">
    <property type="glycosylation" value="2 sites, 1 O-linked glycan (2 sites)"/>
</dbReference>
<dbReference type="iPTMnet" id="Q6A026"/>
<dbReference type="PhosphoSitePlus" id="Q6A026"/>
<dbReference type="SwissPalm" id="Q6A026"/>
<dbReference type="jPOST" id="Q6A026"/>
<dbReference type="PaxDb" id="10090-ENSMUSP00000031104"/>
<dbReference type="ProteomicsDB" id="288025"/>
<dbReference type="Pumba" id="Q6A026"/>
<dbReference type="AGR" id="MGI:1918771"/>
<dbReference type="MGI" id="MGI:1918771">
    <property type="gene designation" value="Pds5a"/>
</dbReference>
<dbReference type="eggNOG" id="KOG1525">
    <property type="taxonomic scope" value="Eukaryota"/>
</dbReference>
<dbReference type="InParanoid" id="Q6A026"/>
<dbReference type="Reactome" id="R-MMU-2467813">
    <property type="pathway name" value="Separation of Sister Chromatids"/>
</dbReference>
<dbReference type="Reactome" id="R-MMU-2468052">
    <property type="pathway name" value="Establishment of Sister Chromatid Cohesion"/>
</dbReference>
<dbReference type="Reactome" id="R-MMU-2470946">
    <property type="pathway name" value="Cohesin Loading onto Chromatin"/>
</dbReference>
<dbReference type="Reactome" id="R-MMU-2500257">
    <property type="pathway name" value="Resolution of Sister Chromatid Cohesion"/>
</dbReference>
<dbReference type="ChiTaRS" id="Pds5a">
    <property type="organism name" value="mouse"/>
</dbReference>
<dbReference type="PRO" id="PR:Q6A026"/>
<dbReference type="Proteomes" id="UP000000589">
    <property type="component" value="Unplaced"/>
</dbReference>
<dbReference type="RNAct" id="Q6A026">
    <property type="molecule type" value="protein"/>
</dbReference>
<dbReference type="GO" id="GO:0005634">
    <property type="term" value="C:nucleus"/>
    <property type="evidence" value="ECO:0007669"/>
    <property type="project" value="UniProtKB-SubCell"/>
</dbReference>
<dbReference type="GO" id="GO:0009952">
    <property type="term" value="P:anterior/posterior pattern specification"/>
    <property type="evidence" value="ECO:0000315"/>
    <property type="project" value="MGI"/>
</dbReference>
<dbReference type="GO" id="GO:0051301">
    <property type="term" value="P:cell division"/>
    <property type="evidence" value="ECO:0007669"/>
    <property type="project" value="UniProtKB-KW"/>
</dbReference>
<dbReference type="GO" id="GO:0003007">
    <property type="term" value="P:heart morphogenesis"/>
    <property type="evidence" value="ECO:0000315"/>
    <property type="project" value="MGI"/>
</dbReference>
<dbReference type="GO" id="GO:0002088">
    <property type="term" value="P:lens development in camera-type eye"/>
    <property type="evidence" value="ECO:0000315"/>
    <property type="project" value="MGI"/>
</dbReference>
<dbReference type="GO" id="GO:0001656">
    <property type="term" value="P:metanephros development"/>
    <property type="evidence" value="ECO:0000315"/>
    <property type="project" value="MGI"/>
</dbReference>
<dbReference type="GO" id="GO:0007064">
    <property type="term" value="P:mitotic sister chromatid cohesion"/>
    <property type="evidence" value="ECO:0007669"/>
    <property type="project" value="InterPro"/>
</dbReference>
<dbReference type="GO" id="GO:0008156">
    <property type="term" value="P:negative regulation of DNA replication"/>
    <property type="evidence" value="ECO:0000250"/>
    <property type="project" value="UniProtKB"/>
</dbReference>
<dbReference type="GO" id="GO:0097402">
    <property type="term" value="P:neuroblast migration"/>
    <property type="evidence" value="ECO:0000315"/>
    <property type="project" value="MGI"/>
</dbReference>
<dbReference type="GO" id="GO:0060021">
    <property type="term" value="P:roof of mouth development"/>
    <property type="evidence" value="ECO:0000315"/>
    <property type="project" value="MGI"/>
</dbReference>
<dbReference type="CDD" id="cd19953">
    <property type="entry name" value="PDS5"/>
    <property type="match status" value="1"/>
</dbReference>
<dbReference type="FunFam" id="1.25.10.10:FF:001146">
    <property type="entry name" value="PDS5 cohesin associated factor B"/>
    <property type="match status" value="1"/>
</dbReference>
<dbReference type="FunFam" id="1.25.10.10:FF:000064">
    <property type="entry name" value="Sister chromatid cohesion protein PDS5 homolog A"/>
    <property type="match status" value="1"/>
</dbReference>
<dbReference type="Gene3D" id="1.25.10.10">
    <property type="entry name" value="Leucine-rich Repeat Variant"/>
    <property type="match status" value="2"/>
</dbReference>
<dbReference type="InterPro" id="IPR011989">
    <property type="entry name" value="ARM-like"/>
</dbReference>
<dbReference type="InterPro" id="IPR016024">
    <property type="entry name" value="ARM-type_fold"/>
</dbReference>
<dbReference type="InterPro" id="IPR039776">
    <property type="entry name" value="Pds5"/>
</dbReference>
<dbReference type="PANTHER" id="PTHR12663">
    <property type="entry name" value="ANDROGEN INDUCED INHIBITOR OF PROLIFERATION AS3 / PDS5-RELATED"/>
    <property type="match status" value="1"/>
</dbReference>
<dbReference type="PANTHER" id="PTHR12663:SF2">
    <property type="entry name" value="SISTER CHROMATID COHESION PROTEIN PDS5 HOMOLOG A"/>
    <property type="match status" value="1"/>
</dbReference>
<dbReference type="Pfam" id="PF20168">
    <property type="entry name" value="PDS5"/>
    <property type="match status" value="1"/>
</dbReference>
<dbReference type="SUPFAM" id="SSF48371">
    <property type="entry name" value="ARM repeat"/>
    <property type="match status" value="1"/>
</dbReference>
<feature type="chain" id="PRO_0000296342" description="Sister chromatid cohesion protein PDS5 homolog A">
    <location>
        <begin position="1"/>
        <end position="1332"/>
    </location>
</feature>
<feature type="repeat" description="HEAT" evidence="3">
    <location>
        <begin position="392"/>
        <end position="428"/>
    </location>
</feature>
<feature type="region of interest" description="Disordered" evidence="4">
    <location>
        <begin position="1138"/>
        <end position="1332"/>
    </location>
</feature>
<feature type="compositionally biased region" description="Polar residues" evidence="4">
    <location>
        <begin position="1160"/>
        <end position="1173"/>
    </location>
</feature>
<feature type="compositionally biased region" description="Polar residues" evidence="4">
    <location>
        <begin position="1222"/>
        <end position="1232"/>
    </location>
</feature>
<feature type="compositionally biased region" description="Basic and acidic residues" evidence="4">
    <location>
        <begin position="1316"/>
        <end position="1332"/>
    </location>
</feature>
<feature type="modified residue" description="N-acetylmethionine" evidence="2">
    <location>
        <position position="1"/>
    </location>
</feature>
<feature type="modified residue" description="Phosphoserine" evidence="2">
    <location>
        <position position="1096"/>
    </location>
</feature>
<feature type="modified residue" description="N6-acetyllysine" evidence="8">
    <location>
        <position position="1145"/>
    </location>
</feature>
<feature type="modified residue" description="Phosphoserine" evidence="7">
    <location>
        <position position="1174"/>
    </location>
</feature>
<feature type="modified residue" description="Phosphoserine" evidence="2">
    <location>
        <position position="1194"/>
    </location>
</feature>
<feature type="modified residue" description="Phosphothreonine" evidence="2">
    <location>
        <position position="1207"/>
    </location>
</feature>
<feature type="modified residue" description="N6-acetyllysine" evidence="8">
    <location>
        <position position="1210"/>
    </location>
</feature>
<feature type="modified residue" description="N6-acetyllysine" evidence="2">
    <location>
        <position position="1288"/>
    </location>
</feature>
<feature type="modified residue" description="Phosphoserine" evidence="2">
    <location>
        <position position="1303"/>
    </location>
</feature>
<feature type="sequence conflict" description="In Ref. 2; BAD32270." evidence="5" ref="2">
    <original>K</original>
    <variation>E</variation>
    <location>
        <position position="557"/>
    </location>
</feature>
<reference key="1">
    <citation type="journal article" date="2009" name="PLoS Biol.">
        <title>Lineage-specific biology revealed by a finished genome assembly of the mouse.</title>
        <authorList>
            <person name="Church D.M."/>
            <person name="Goodstadt L."/>
            <person name="Hillier L.W."/>
            <person name="Zody M.C."/>
            <person name="Goldstein S."/>
            <person name="She X."/>
            <person name="Bult C.J."/>
            <person name="Agarwala R."/>
            <person name="Cherry J.L."/>
            <person name="DiCuccio M."/>
            <person name="Hlavina W."/>
            <person name="Kapustin Y."/>
            <person name="Meric P."/>
            <person name="Maglott D."/>
            <person name="Birtle Z."/>
            <person name="Marques A.C."/>
            <person name="Graves T."/>
            <person name="Zhou S."/>
            <person name="Teague B."/>
            <person name="Potamousis K."/>
            <person name="Churas C."/>
            <person name="Place M."/>
            <person name="Herschleb J."/>
            <person name="Runnheim R."/>
            <person name="Forrest D."/>
            <person name="Amos-Landgraf J."/>
            <person name="Schwartz D.C."/>
            <person name="Cheng Z."/>
            <person name="Lindblad-Toh K."/>
            <person name="Eichler E.E."/>
            <person name="Ponting C.P."/>
        </authorList>
    </citation>
    <scope>NUCLEOTIDE SEQUENCE [LARGE SCALE GENOMIC DNA]</scope>
    <source>
        <strain>C57BL/6J</strain>
    </source>
</reference>
<reference evidence="5 6" key="2">
    <citation type="journal article" date="2004" name="DNA Res.">
        <title>Prediction of the coding sequences of mouse homologues of KIAA gene: IV. The complete nucleotide sequences of 500 mouse KIAA-homologous cDNAs identified by screening of terminal sequences of cDNA clones randomly sampled from size-fractionated libraries.</title>
        <authorList>
            <person name="Okazaki N."/>
            <person name="Kikuno R."/>
            <person name="Ohara R."/>
            <person name="Inamoto S."/>
            <person name="Koseki H."/>
            <person name="Hiraoka S."/>
            <person name="Saga Y."/>
            <person name="Seino S."/>
            <person name="Nishimura M."/>
            <person name="Kaisho T."/>
            <person name="Hoshino K."/>
            <person name="Kitamura H."/>
            <person name="Nagase T."/>
            <person name="Ohara O."/>
            <person name="Koga H."/>
        </authorList>
    </citation>
    <scope>NUCLEOTIDE SEQUENCE [LARGE SCALE MRNA] OF 1-1112</scope>
    <source>
        <tissue evidence="6">Embryonic intestine</tissue>
    </source>
</reference>
<reference key="3">
    <citation type="journal article" date="2010" name="Cell">
        <title>A tissue-specific atlas of mouse protein phosphorylation and expression.</title>
        <authorList>
            <person name="Huttlin E.L."/>
            <person name="Jedrychowski M.P."/>
            <person name="Elias J.E."/>
            <person name="Goswami T."/>
            <person name="Rad R."/>
            <person name="Beausoleil S.A."/>
            <person name="Villen J."/>
            <person name="Haas W."/>
            <person name="Sowa M.E."/>
            <person name="Gygi S.P."/>
        </authorList>
    </citation>
    <scope>PHOSPHORYLATION [LARGE SCALE ANALYSIS] AT SER-1174</scope>
    <scope>IDENTIFICATION BY MASS SPECTROMETRY [LARGE SCALE ANALYSIS]</scope>
    <source>
        <tissue>Brain</tissue>
        <tissue>Brown adipose tissue</tissue>
        <tissue>Heart</tissue>
        <tissue>Kidney</tissue>
        <tissue>Liver</tissue>
        <tissue>Lung</tissue>
        <tissue>Pancreas</tissue>
        <tissue>Spleen</tissue>
        <tissue>Testis</tissue>
    </source>
</reference>
<reference key="4">
    <citation type="journal article" date="2013" name="Mol. Cell">
        <title>SIRT5-mediated lysine desuccinylation impacts diverse metabolic pathways.</title>
        <authorList>
            <person name="Park J."/>
            <person name="Chen Y."/>
            <person name="Tishkoff D.X."/>
            <person name="Peng C."/>
            <person name="Tan M."/>
            <person name="Dai L."/>
            <person name="Xie Z."/>
            <person name="Zhang Y."/>
            <person name="Zwaans B.M."/>
            <person name="Skinner M.E."/>
            <person name="Lombard D.B."/>
            <person name="Zhao Y."/>
        </authorList>
    </citation>
    <scope>ACETYLATION [LARGE SCALE ANALYSIS] AT LYS-1145 AND LYS-1210</scope>
    <scope>IDENTIFICATION BY MASS SPECTROMETRY [LARGE SCALE ANALYSIS]</scope>
    <source>
        <tissue>Embryonic fibroblast</tissue>
    </source>
</reference>